<evidence type="ECO:0000255" key="1">
    <source>
        <dbReference type="HAMAP-Rule" id="MF_01317"/>
    </source>
</evidence>
<reference key="1">
    <citation type="journal article" date="2002" name="Proc. Natl. Acad. Sci. U.S.A.">
        <title>The chloroplast and mitochondrial genome sequences of the charophyte Chaetosphaeridium globosum: insights into the timing of the events that restructured organelle DNAs within the green algal lineage that led to land plants.</title>
        <authorList>
            <person name="Turmel M."/>
            <person name="Otis C."/>
            <person name="Lemieux C."/>
        </authorList>
    </citation>
    <scope>NUCLEOTIDE SEQUENCE [LARGE SCALE GENOMIC DNA]</scope>
    <source>
        <strain>M1311</strain>
    </source>
</reference>
<feature type="chain" id="PRO_0000219695" description="Photosystem II reaction center protein L">
    <location>
        <begin position="1"/>
        <end position="38"/>
    </location>
</feature>
<feature type="transmembrane region" description="Helical" evidence="1">
    <location>
        <begin position="17"/>
        <end position="37"/>
    </location>
</feature>
<gene>
    <name evidence="1" type="primary">psbL</name>
</gene>
<organism>
    <name type="scientific">Chaetosphaeridium globosum</name>
    <name type="common">Charophycean green alga</name>
    <name type="synonym">Herposteiron globosum</name>
    <dbReference type="NCBI Taxonomy" id="96477"/>
    <lineage>
        <taxon>Eukaryota</taxon>
        <taxon>Viridiplantae</taxon>
        <taxon>Streptophyta</taxon>
        <taxon>Coleochaetophyceae</taxon>
        <taxon>Coleochaetales</taxon>
        <taxon>Chaetosphaeridiaceae</taxon>
        <taxon>Chaetosphaeridium</taxon>
    </lineage>
</organism>
<proteinExistence type="inferred from homology"/>
<geneLocation type="chloroplast"/>
<name>PSBL_CHAGL</name>
<sequence length="38" mass="4436">MTTPNPNKQSVELNRTSLFWGLLLIFVLAVLFSNYFFN</sequence>
<dbReference type="EMBL" id="AF494278">
    <property type="protein sequence ID" value="AAM96548.1"/>
    <property type="molecule type" value="Genomic_DNA"/>
</dbReference>
<dbReference type="RefSeq" id="NP_683819.1">
    <property type="nucleotide sequence ID" value="NC_004115.1"/>
</dbReference>
<dbReference type="SMR" id="Q8M9W9"/>
<dbReference type="GeneID" id="860704"/>
<dbReference type="GO" id="GO:0009535">
    <property type="term" value="C:chloroplast thylakoid membrane"/>
    <property type="evidence" value="ECO:0007669"/>
    <property type="project" value="UniProtKB-SubCell"/>
</dbReference>
<dbReference type="GO" id="GO:0009539">
    <property type="term" value="C:photosystem II reaction center"/>
    <property type="evidence" value="ECO:0007669"/>
    <property type="project" value="InterPro"/>
</dbReference>
<dbReference type="GO" id="GO:0015979">
    <property type="term" value="P:photosynthesis"/>
    <property type="evidence" value="ECO:0007669"/>
    <property type="project" value="UniProtKB-UniRule"/>
</dbReference>
<dbReference type="HAMAP" id="MF_01317">
    <property type="entry name" value="PSII_PsbL"/>
    <property type="match status" value="1"/>
</dbReference>
<dbReference type="InterPro" id="IPR003372">
    <property type="entry name" value="PSII_PsbL"/>
</dbReference>
<dbReference type="InterPro" id="IPR037266">
    <property type="entry name" value="PSII_PsbL_sf"/>
</dbReference>
<dbReference type="NCBIfam" id="NF001972">
    <property type="entry name" value="PRK00753.1"/>
    <property type="match status" value="1"/>
</dbReference>
<dbReference type="Pfam" id="PF02419">
    <property type="entry name" value="PsbL"/>
    <property type="match status" value="1"/>
</dbReference>
<dbReference type="SUPFAM" id="SSF161017">
    <property type="entry name" value="Photosystem II reaction center protein L, PsbL"/>
    <property type="match status" value="1"/>
</dbReference>
<comment type="function">
    <text evidence="1">One of the components of the core complex of photosystem II (PSII). PSII is a light-driven water:plastoquinone oxidoreductase that uses light energy to abstract electrons from H(2)O, generating O(2) and a proton gradient subsequently used for ATP formation. It consists of a core antenna complex that captures photons, and an electron transfer chain that converts photonic excitation into a charge separation. This subunit is found at the monomer-monomer interface and is required for correct PSII assembly and/or dimerization.</text>
</comment>
<comment type="subunit">
    <text evidence="1">PSII is composed of 1 copy each of membrane proteins PsbA, PsbB, PsbC, PsbD, PsbE, PsbF, PsbH, PsbI, PsbJ, PsbK, PsbL, PsbM, PsbT, PsbX, PsbY, PsbZ, Psb30/Ycf12, at least 3 peripheral proteins of the oxygen-evolving complex and a large number of cofactors. It forms dimeric complexes.</text>
</comment>
<comment type="subcellular location">
    <subcellularLocation>
        <location evidence="1">Plastid</location>
        <location evidence="1">Chloroplast thylakoid membrane</location>
        <topology evidence="1">Single-pass membrane protein</topology>
    </subcellularLocation>
</comment>
<comment type="similarity">
    <text evidence="1">Belongs to the PsbL family.</text>
</comment>
<protein>
    <recommendedName>
        <fullName evidence="1">Photosystem II reaction center protein L</fullName>
        <shortName evidence="1">PSII-L</shortName>
    </recommendedName>
</protein>
<keyword id="KW-0150">Chloroplast</keyword>
<keyword id="KW-0472">Membrane</keyword>
<keyword id="KW-0602">Photosynthesis</keyword>
<keyword id="KW-0604">Photosystem II</keyword>
<keyword id="KW-0934">Plastid</keyword>
<keyword id="KW-0674">Reaction center</keyword>
<keyword id="KW-0793">Thylakoid</keyword>
<keyword id="KW-0812">Transmembrane</keyword>
<keyword id="KW-1133">Transmembrane helix</keyword>
<accession>Q8M9W9</accession>